<sequence>MTNILIVEDEQNLARFIELELTHENYTVDIENDGKAGLDKALSKPYDLYILDLMLPNINGLEICRQIRQKTTTPIIIITAKSETYDKVAGLDYGADDYIVKPFDIEELLARIRAVLRRQPDKDVLDINGIIIDKDAFKVTVNGHQLELTKTEYDLLYVLAENRNHVMQREQILDHVWGYNSEVETNVVDVYIRYLRNKLKPFNKEKSIETVRGVGYVIR</sequence>
<reference key="1">
    <citation type="journal article" date="2005" name="J. Bacteriol.">
        <title>Insights on evolution of virulence and resistance from the complete genome analysis of an early methicillin-resistant Staphylococcus aureus strain and a biofilm-producing methicillin-resistant Staphylococcus epidermidis strain.</title>
        <authorList>
            <person name="Gill S.R."/>
            <person name="Fouts D.E."/>
            <person name="Archer G.L."/>
            <person name="Mongodin E.F."/>
            <person name="DeBoy R.T."/>
            <person name="Ravel J."/>
            <person name="Paulsen I.T."/>
            <person name="Kolonay J.F."/>
            <person name="Brinkac L.M."/>
            <person name="Beanan M.J."/>
            <person name="Dodson R.J."/>
            <person name="Daugherty S.C."/>
            <person name="Madupu R."/>
            <person name="Angiuoli S.V."/>
            <person name="Durkin A.S."/>
            <person name="Haft D.H."/>
            <person name="Vamathevan J.J."/>
            <person name="Khouri H."/>
            <person name="Utterback T.R."/>
            <person name="Lee C."/>
            <person name="Dimitrov G."/>
            <person name="Jiang L."/>
            <person name="Qin H."/>
            <person name="Weidman J."/>
            <person name="Tran K."/>
            <person name="Kang K.H."/>
            <person name="Hance I.R."/>
            <person name="Nelson K.E."/>
            <person name="Fraser C.M."/>
        </authorList>
    </citation>
    <scope>NUCLEOTIDE SEQUENCE [LARGE SCALE GENOMIC DNA]</scope>
    <source>
        <strain>ATCC 35984 / DSM 28319 / BCRC 17069 / CCUG 31568 / BM 3577 / RP62A</strain>
    </source>
</reference>
<evidence type="ECO:0000250" key="1"/>
<evidence type="ECO:0000255" key="2">
    <source>
        <dbReference type="PROSITE-ProRule" id="PRU00169"/>
    </source>
</evidence>
<evidence type="ECO:0000255" key="3">
    <source>
        <dbReference type="PROSITE-ProRule" id="PRU01091"/>
    </source>
</evidence>
<name>ARLR_STAEQ</name>
<feature type="chain" id="PRO_0000293444" description="Response regulator ArlR">
    <location>
        <begin position="1"/>
        <end position="219"/>
    </location>
</feature>
<feature type="domain" description="Response regulatory" evidence="2">
    <location>
        <begin position="3"/>
        <end position="116"/>
    </location>
</feature>
<feature type="DNA-binding region" description="OmpR/PhoB-type" evidence="3">
    <location>
        <begin position="122"/>
        <end position="219"/>
    </location>
</feature>
<feature type="modified residue" description="4-aspartylphosphate" evidence="2">
    <location>
        <position position="52"/>
    </location>
</feature>
<organism>
    <name type="scientific">Staphylococcus epidermidis (strain ATCC 35984 / DSM 28319 / BCRC 17069 / CCUG 31568 / BM 3577 / RP62A)</name>
    <dbReference type="NCBI Taxonomy" id="176279"/>
    <lineage>
        <taxon>Bacteria</taxon>
        <taxon>Bacillati</taxon>
        <taxon>Bacillota</taxon>
        <taxon>Bacilli</taxon>
        <taxon>Bacillales</taxon>
        <taxon>Staphylococcaceae</taxon>
        <taxon>Staphylococcus</taxon>
    </lineage>
</organism>
<protein>
    <recommendedName>
        <fullName>Response regulator ArlR</fullName>
    </recommendedName>
</protein>
<dbReference type="EMBL" id="CP000029">
    <property type="protein sequence ID" value="AAW54343.1"/>
    <property type="molecule type" value="Genomic_DNA"/>
</dbReference>
<dbReference type="RefSeq" id="WP_002446427.1">
    <property type="nucleotide sequence ID" value="NC_002976.3"/>
</dbReference>
<dbReference type="SMR" id="Q5HPC3"/>
<dbReference type="STRING" id="176279.SERP0989"/>
<dbReference type="KEGG" id="ser:SERP0989"/>
<dbReference type="eggNOG" id="COG0745">
    <property type="taxonomic scope" value="Bacteria"/>
</dbReference>
<dbReference type="HOGENOM" id="CLU_000445_30_1_9"/>
<dbReference type="Proteomes" id="UP000000531">
    <property type="component" value="Chromosome"/>
</dbReference>
<dbReference type="GO" id="GO:0005829">
    <property type="term" value="C:cytosol"/>
    <property type="evidence" value="ECO:0007669"/>
    <property type="project" value="TreeGrafter"/>
</dbReference>
<dbReference type="GO" id="GO:0032993">
    <property type="term" value="C:protein-DNA complex"/>
    <property type="evidence" value="ECO:0007669"/>
    <property type="project" value="TreeGrafter"/>
</dbReference>
<dbReference type="GO" id="GO:0000156">
    <property type="term" value="F:phosphorelay response regulator activity"/>
    <property type="evidence" value="ECO:0007669"/>
    <property type="project" value="TreeGrafter"/>
</dbReference>
<dbReference type="GO" id="GO:0000976">
    <property type="term" value="F:transcription cis-regulatory region binding"/>
    <property type="evidence" value="ECO:0007669"/>
    <property type="project" value="TreeGrafter"/>
</dbReference>
<dbReference type="GO" id="GO:0006355">
    <property type="term" value="P:regulation of DNA-templated transcription"/>
    <property type="evidence" value="ECO:0007669"/>
    <property type="project" value="InterPro"/>
</dbReference>
<dbReference type="CDD" id="cd00383">
    <property type="entry name" value="trans_reg_C"/>
    <property type="match status" value="1"/>
</dbReference>
<dbReference type="FunFam" id="3.40.50.2300:FF:000001">
    <property type="entry name" value="DNA-binding response regulator PhoB"/>
    <property type="match status" value="1"/>
</dbReference>
<dbReference type="FunFam" id="1.10.10.10:FF:000005">
    <property type="entry name" value="Two-component system response regulator"/>
    <property type="match status" value="1"/>
</dbReference>
<dbReference type="Gene3D" id="3.40.50.2300">
    <property type="match status" value="1"/>
</dbReference>
<dbReference type="Gene3D" id="6.10.250.690">
    <property type="match status" value="1"/>
</dbReference>
<dbReference type="Gene3D" id="1.10.10.10">
    <property type="entry name" value="Winged helix-like DNA-binding domain superfamily/Winged helix DNA-binding domain"/>
    <property type="match status" value="1"/>
</dbReference>
<dbReference type="InterPro" id="IPR011006">
    <property type="entry name" value="CheY-like_superfamily"/>
</dbReference>
<dbReference type="InterPro" id="IPR001867">
    <property type="entry name" value="OmpR/PhoB-type_DNA-bd"/>
</dbReference>
<dbReference type="InterPro" id="IPR016032">
    <property type="entry name" value="Sig_transdc_resp-reg_C-effctor"/>
</dbReference>
<dbReference type="InterPro" id="IPR001789">
    <property type="entry name" value="Sig_transdc_resp-reg_receiver"/>
</dbReference>
<dbReference type="InterPro" id="IPR039420">
    <property type="entry name" value="WalR-like"/>
</dbReference>
<dbReference type="InterPro" id="IPR036388">
    <property type="entry name" value="WH-like_DNA-bd_sf"/>
</dbReference>
<dbReference type="PANTHER" id="PTHR48111">
    <property type="entry name" value="REGULATOR OF RPOS"/>
    <property type="match status" value="1"/>
</dbReference>
<dbReference type="PANTHER" id="PTHR48111:SF22">
    <property type="entry name" value="REGULATOR OF RPOS"/>
    <property type="match status" value="1"/>
</dbReference>
<dbReference type="Pfam" id="PF00072">
    <property type="entry name" value="Response_reg"/>
    <property type="match status" value="1"/>
</dbReference>
<dbReference type="Pfam" id="PF00486">
    <property type="entry name" value="Trans_reg_C"/>
    <property type="match status" value="1"/>
</dbReference>
<dbReference type="SMART" id="SM00448">
    <property type="entry name" value="REC"/>
    <property type="match status" value="1"/>
</dbReference>
<dbReference type="SMART" id="SM00862">
    <property type="entry name" value="Trans_reg_C"/>
    <property type="match status" value="1"/>
</dbReference>
<dbReference type="SUPFAM" id="SSF46894">
    <property type="entry name" value="C-terminal effector domain of the bipartite response regulators"/>
    <property type="match status" value="1"/>
</dbReference>
<dbReference type="SUPFAM" id="SSF52172">
    <property type="entry name" value="CheY-like"/>
    <property type="match status" value="1"/>
</dbReference>
<dbReference type="PROSITE" id="PS51755">
    <property type="entry name" value="OMPR_PHOB"/>
    <property type="match status" value="1"/>
</dbReference>
<dbReference type="PROSITE" id="PS50110">
    <property type="entry name" value="RESPONSE_REGULATORY"/>
    <property type="match status" value="1"/>
</dbReference>
<comment type="function">
    <text evidence="1">Member of the two-component regulatory system ArlS/ArlR.</text>
</comment>
<comment type="subcellular location">
    <subcellularLocation>
        <location evidence="1">Cytoplasm</location>
    </subcellularLocation>
</comment>
<comment type="PTM">
    <text evidence="1">Phosphorylated by ArlS.</text>
</comment>
<gene>
    <name type="primary">arlR</name>
    <name type="ordered locus">SERP0989</name>
</gene>
<proteinExistence type="inferred from homology"/>
<accession>Q5HPC3</accession>
<keyword id="KW-0963">Cytoplasm</keyword>
<keyword id="KW-0238">DNA-binding</keyword>
<keyword id="KW-0597">Phosphoprotein</keyword>
<keyword id="KW-1185">Reference proteome</keyword>
<keyword id="KW-0804">Transcription</keyword>
<keyword id="KW-0805">Transcription regulation</keyword>
<keyword id="KW-0902">Two-component regulatory system</keyword>